<gene>
    <name evidence="1" type="primary">engB</name>
    <name type="ordered locus">XC_0767</name>
</gene>
<name>ENGB_XANC8</name>
<evidence type="ECO:0000255" key="1">
    <source>
        <dbReference type="HAMAP-Rule" id="MF_00321"/>
    </source>
</evidence>
<dbReference type="EMBL" id="CP000050">
    <property type="protein sequence ID" value="AAY47845.1"/>
    <property type="molecule type" value="Genomic_DNA"/>
</dbReference>
<dbReference type="SMR" id="Q4UYM8"/>
<dbReference type="KEGG" id="xcb:XC_0767"/>
<dbReference type="HOGENOM" id="CLU_033732_3_0_6"/>
<dbReference type="Proteomes" id="UP000000420">
    <property type="component" value="Chromosome"/>
</dbReference>
<dbReference type="GO" id="GO:0005829">
    <property type="term" value="C:cytosol"/>
    <property type="evidence" value="ECO:0007669"/>
    <property type="project" value="TreeGrafter"/>
</dbReference>
<dbReference type="GO" id="GO:0005525">
    <property type="term" value="F:GTP binding"/>
    <property type="evidence" value="ECO:0007669"/>
    <property type="project" value="UniProtKB-UniRule"/>
</dbReference>
<dbReference type="GO" id="GO:0046872">
    <property type="term" value="F:metal ion binding"/>
    <property type="evidence" value="ECO:0007669"/>
    <property type="project" value="UniProtKB-KW"/>
</dbReference>
<dbReference type="GO" id="GO:0000917">
    <property type="term" value="P:division septum assembly"/>
    <property type="evidence" value="ECO:0007669"/>
    <property type="project" value="UniProtKB-KW"/>
</dbReference>
<dbReference type="CDD" id="cd01876">
    <property type="entry name" value="YihA_EngB"/>
    <property type="match status" value="1"/>
</dbReference>
<dbReference type="FunFam" id="3.40.50.300:FF:000098">
    <property type="entry name" value="Probable GTP-binding protein EngB"/>
    <property type="match status" value="1"/>
</dbReference>
<dbReference type="Gene3D" id="3.40.50.300">
    <property type="entry name" value="P-loop containing nucleotide triphosphate hydrolases"/>
    <property type="match status" value="1"/>
</dbReference>
<dbReference type="HAMAP" id="MF_00321">
    <property type="entry name" value="GTPase_EngB"/>
    <property type="match status" value="1"/>
</dbReference>
<dbReference type="InterPro" id="IPR030393">
    <property type="entry name" value="G_ENGB_dom"/>
</dbReference>
<dbReference type="InterPro" id="IPR006073">
    <property type="entry name" value="GTP-bd"/>
</dbReference>
<dbReference type="InterPro" id="IPR019987">
    <property type="entry name" value="GTP-bd_ribosome_bio_YsxC"/>
</dbReference>
<dbReference type="InterPro" id="IPR027417">
    <property type="entry name" value="P-loop_NTPase"/>
</dbReference>
<dbReference type="NCBIfam" id="TIGR03598">
    <property type="entry name" value="GTPase_YsxC"/>
    <property type="match status" value="1"/>
</dbReference>
<dbReference type="PANTHER" id="PTHR11649:SF13">
    <property type="entry name" value="ENGB-TYPE G DOMAIN-CONTAINING PROTEIN"/>
    <property type="match status" value="1"/>
</dbReference>
<dbReference type="PANTHER" id="PTHR11649">
    <property type="entry name" value="MSS1/TRME-RELATED GTP-BINDING PROTEIN"/>
    <property type="match status" value="1"/>
</dbReference>
<dbReference type="Pfam" id="PF01926">
    <property type="entry name" value="MMR_HSR1"/>
    <property type="match status" value="1"/>
</dbReference>
<dbReference type="SUPFAM" id="SSF52540">
    <property type="entry name" value="P-loop containing nucleoside triphosphate hydrolases"/>
    <property type="match status" value="1"/>
</dbReference>
<dbReference type="PROSITE" id="PS51706">
    <property type="entry name" value="G_ENGB"/>
    <property type="match status" value="1"/>
</dbReference>
<proteinExistence type="inferred from homology"/>
<comment type="function">
    <text evidence="1">Necessary for normal cell division and for the maintenance of normal septation.</text>
</comment>
<comment type="cofactor">
    <cofactor evidence="1">
        <name>Mg(2+)</name>
        <dbReference type="ChEBI" id="CHEBI:18420"/>
    </cofactor>
</comment>
<comment type="similarity">
    <text evidence="1">Belongs to the TRAFAC class TrmE-Era-EngA-EngB-Septin-like GTPase superfamily. EngB GTPase family.</text>
</comment>
<sequence>MSLLIEQARYHLSAHNARQLPDDGGYEVAFAGRSNAGKSSALNALTRQNSLARVSKTPGRTQQLVFFQIQPERYLVDLPGYGYAKVPQDLQAHWQAFIDRYFRTREALRGLVVVMDIRHPLKDYDLQMLGYAAERGLPAHGLLTKADKLGRGQQMQTLQKVKKEVSSRFGDSVTVQTYSGESRQGVDELRGIVGGWLGLDVEPPADA</sequence>
<keyword id="KW-0131">Cell cycle</keyword>
<keyword id="KW-0132">Cell division</keyword>
<keyword id="KW-0342">GTP-binding</keyword>
<keyword id="KW-0460">Magnesium</keyword>
<keyword id="KW-0479">Metal-binding</keyword>
<keyword id="KW-0547">Nucleotide-binding</keyword>
<keyword id="KW-0717">Septation</keyword>
<reference key="1">
    <citation type="journal article" date="2005" name="Genome Res.">
        <title>Comparative and functional genomic analyses of the pathogenicity of phytopathogen Xanthomonas campestris pv. campestris.</title>
        <authorList>
            <person name="Qian W."/>
            <person name="Jia Y."/>
            <person name="Ren S.-X."/>
            <person name="He Y.-Q."/>
            <person name="Feng J.-X."/>
            <person name="Lu L.-F."/>
            <person name="Sun Q."/>
            <person name="Ying G."/>
            <person name="Tang D.-J."/>
            <person name="Tang H."/>
            <person name="Wu W."/>
            <person name="Hao P."/>
            <person name="Wang L."/>
            <person name="Jiang B.-L."/>
            <person name="Zeng S."/>
            <person name="Gu W.-Y."/>
            <person name="Lu G."/>
            <person name="Rong L."/>
            <person name="Tian Y."/>
            <person name="Yao Z."/>
            <person name="Fu G."/>
            <person name="Chen B."/>
            <person name="Fang R."/>
            <person name="Qiang B."/>
            <person name="Chen Z."/>
            <person name="Zhao G.-P."/>
            <person name="Tang J.-L."/>
            <person name="He C."/>
        </authorList>
    </citation>
    <scope>NUCLEOTIDE SEQUENCE [LARGE SCALE GENOMIC DNA]</scope>
    <source>
        <strain>8004</strain>
    </source>
</reference>
<feature type="chain" id="PRO_0000266981" description="Probable GTP-binding protein EngB">
    <location>
        <begin position="1"/>
        <end position="207"/>
    </location>
</feature>
<feature type="domain" description="EngB-type G" evidence="1">
    <location>
        <begin position="24"/>
        <end position="199"/>
    </location>
</feature>
<feature type="binding site" evidence="1">
    <location>
        <begin position="32"/>
        <end position="39"/>
    </location>
    <ligand>
        <name>GTP</name>
        <dbReference type="ChEBI" id="CHEBI:37565"/>
    </ligand>
</feature>
<feature type="binding site" evidence="1">
    <location>
        <position position="39"/>
    </location>
    <ligand>
        <name>Mg(2+)</name>
        <dbReference type="ChEBI" id="CHEBI:18420"/>
    </ligand>
</feature>
<feature type="binding site" evidence="1">
    <location>
        <begin position="59"/>
        <end position="63"/>
    </location>
    <ligand>
        <name>GTP</name>
        <dbReference type="ChEBI" id="CHEBI:37565"/>
    </ligand>
</feature>
<feature type="binding site" evidence="1">
    <location>
        <position position="61"/>
    </location>
    <ligand>
        <name>Mg(2+)</name>
        <dbReference type="ChEBI" id="CHEBI:18420"/>
    </ligand>
</feature>
<feature type="binding site" evidence="1">
    <location>
        <begin position="77"/>
        <end position="80"/>
    </location>
    <ligand>
        <name>GTP</name>
        <dbReference type="ChEBI" id="CHEBI:37565"/>
    </ligand>
</feature>
<feature type="binding site" evidence="1">
    <location>
        <begin position="144"/>
        <end position="147"/>
    </location>
    <ligand>
        <name>GTP</name>
        <dbReference type="ChEBI" id="CHEBI:37565"/>
    </ligand>
</feature>
<feature type="binding site" evidence="1">
    <location>
        <begin position="178"/>
        <end position="180"/>
    </location>
    <ligand>
        <name>GTP</name>
        <dbReference type="ChEBI" id="CHEBI:37565"/>
    </ligand>
</feature>
<organism>
    <name type="scientific">Xanthomonas campestris pv. campestris (strain 8004)</name>
    <dbReference type="NCBI Taxonomy" id="314565"/>
    <lineage>
        <taxon>Bacteria</taxon>
        <taxon>Pseudomonadati</taxon>
        <taxon>Pseudomonadota</taxon>
        <taxon>Gammaproteobacteria</taxon>
        <taxon>Lysobacterales</taxon>
        <taxon>Lysobacteraceae</taxon>
        <taxon>Xanthomonas</taxon>
    </lineage>
</organism>
<accession>Q4UYM8</accession>
<protein>
    <recommendedName>
        <fullName evidence="1">Probable GTP-binding protein EngB</fullName>
    </recommendedName>
</protein>